<reference key="1">
    <citation type="journal article" date="2001" name="Nature">
        <title>Complete genome sequence of Salmonella enterica serovar Typhimurium LT2.</title>
        <authorList>
            <person name="McClelland M."/>
            <person name="Sanderson K.E."/>
            <person name="Spieth J."/>
            <person name="Clifton S.W."/>
            <person name="Latreille P."/>
            <person name="Courtney L."/>
            <person name="Porwollik S."/>
            <person name="Ali J."/>
            <person name="Dante M."/>
            <person name="Du F."/>
            <person name="Hou S."/>
            <person name="Layman D."/>
            <person name="Leonard S."/>
            <person name="Nguyen C."/>
            <person name="Scott K."/>
            <person name="Holmes A."/>
            <person name="Grewal N."/>
            <person name="Mulvaney E."/>
            <person name="Ryan E."/>
            <person name="Sun H."/>
            <person name="Florea L."/>
            <person name="Miller W."/>
            <person name="Stoneking T."/>
            <person name="Nhan M."/>
            <person name="Waterston R."/>
            <person name="Wilson R.K."/>
        </authorList>
    </citation>
    <scope>NUCLEOTIDE SEQUENCE [LARGE SCALE GENOMIC DNA]</scope>
    <source>
        <strain>LT2 / SGSC1412 / ATCC 700720</strain>
    </source>
</reference>
<sequence>MSESLHLTRNGPILEITLDRPKANAIDAKTSFAMGEAFLNFRDDPELRVAIITGGGEKFFSAGWDLKAAAEGEAPDADFGPGGFAGLTEIFDLDKPVIAAVNGYAFGGGFELALAADFIVCAENASFALPEAKLGIVPDSGGVLRLPKLLPPAIVNEMVMTGRRMSAEEALRWGVVNRVVSQSELMESARELAQQLVNSAPLAIAALKEIYRATSEMPVEEGYRYIRSGVLKHYPSVLHSEDALEGPQAFAEKRDPVWKGR</sequence>
<proteinExistence type="inferred from homology"/>
<gene>
    <name evidence="2" type="primary">caiD</name>
    <name type="ordered locus">STM0070</name>
</gene>
<name>CAID_SALTY</name>
<organism>
    <name type="scientific">Salmonella typhimurium (strain LT2 / SGSC1412 / ATCC 700720)</name>
    <dbReference type="NCBI Taxonomy" id="99287"/>
    <lineage>
        <taxon>Bacteria</taxon>
        <taxon>Pseudomonadati</taxon>
        <taxon>Pseudomonadota</taxon>
        <taxon>Gammaproteobacteria</taxon>
        <taxon>Enterobacterales</taxon>
        <taxon>Enterobacteriaceae</taxon>
        <taxon>Salmonella</taxon>
    </lineage>
</organism>
<dbReference type="EC" id="4.2.1.149" evidence="2"/>
<dbReference type="EMBL" id="AE006468">
    <property type="protein sequence ID" value="AAL19034.1"/>
    <property type="molecule type" value="Genomic_DNA"/>
</dbReference>
<dbReference type="RefSeq" id="NP_459075.1">
    <property type="nucleotide sequence ID" value="NC_003197.2"/>
</dbReference>
<dbReference type="RefSeq" id="WP_000004385.1">
    <property type="nucleotide sequence ID" value="NC_003197.2"/>
</dbReference>
<dbReference type="SMR" id="Q8ZRX5"/>
<dbReference type="STRING" id="99287.STM0070"/>
<dbReference type="PaxDb" id="99287-STM0070"/>
<dbReference type="GeneID" id="1251588"/>
<dbReference type="KEGG" id="stm:STM0070"/>
<dbReference type="PATRIC" id="fig|99287.12.peg.72"/>
<dbReference type="HOGENOM" id="CLU_009834_7_6_6"/>
<dbReference type="OMA" id="QYVAHVE"/>
<dbReference type="PhylomeDB" id="Q8ZRX5"/>
<dbReference type="BioCyc" id="SENT99287:STM0070-MONOMER"/>
<dbReference type="UniPathway" id="UPA00117"/>
<dbReference type="Proteomes" id="UP000001014">
    <property type="component" value="Chromosome"/>
</dbReference>
<dbReference type="GO" id="GO:0016836">
    <property type="term" value="F:hydro-lyase activity"/>
    <property type="evidence" value="ECO:0007669"/>
    <property type="project" value="UniProtKB-UniRule"/>
</dbReference>
<dbReference type="GO" id="GO:0008735">
    <property type="term" value="F:L-carnitine CoA-transferase activity"/>
    <property type="evidence" value="ECO:0007669"/>
    <property type="project" value="RHEA"/>
</dbReference>
<dbReference type="GO" id="GO:0009437">
    <property type="term" value="P:carnitine metabolic process"/>
    <property type="evidence" value="ECO:0007669"/>
    <property type="project" value="UniProtKB-UniRule"/>
</dbReference>
<dbReference type="GO" id="GO:0006635">
    <property type="term" value="P:fatty acid beta-oxidation"/>
    <property type="evidence" value="ECO:0000318"/>
    <property type="project" value="GO_Central"/>
</dbReference>
<dbReference type="CDD" id="cd06558">
    <property type="entry name" value="crotonase-like"/>
    <property type="match status" value="1"/>
</dbReference>
<dbReference type="FunFam" id="1.10.12.10:FF:000005">
    <property type="entry name" value="Carnitinyl-CoA dehydratase"/>
    <property type="match status" value="1"/>
</dbReference>
<dbReference type="FunFam" id="3.90.226.10:FF:000009">
    <property type="entry name" value="Carnitinyl-CoA dehydratase"/>
    <property type="match status" value="1"/>
</dbReference>
<dbReference type="Gene3D" id="3.90.226.10">
    <property type="entry name" value="2-enoyl-CoA Hydratase, Chain A, domain 1"/>
    <property type="match status" value="1"/>
</dbReference>
<dbReference type="Gene3D" id="1.10.12.10">
    <property type="entry name" value="Lyase 2-enoyl-coa Hydratase, Chain A, domain 2"/>
    <property type="match status" value="1"/>
</dbReference>
<dbReference type="HAMAP" id="MF_01051">
    <property type="entry name" value="CaiD"/>
    <property type="match status" value="1"/>
</dbReference>
<dbReference type="InterPro" id="IPR022852">
    <property type="entry name" value="Carnitinyl_CoA_dehydratase"/>
</dbReference>
<dbReference type="InterPro" id="IPR029045">
    <property type="entry name" value="ClpP/crotonase-like_dom_sf"/>
</dbReference>
<dbReference type="InterPro" id="IPR018376">
    <property type="entry name" value="Enoyl-CoA_hyd/isom_CS"/>
</dbReference>
<dbReference type="InterPro" id="IPR001753">
    <property type="entry name" value="Enoyl-CoA_hydra/iso"/>
</dbReference>
<dbReference type="InterPro" id="IPR014748">
    <property type="entry name" value="Enoyl-CoA_hydra_C"/>
</dbReference>
<dbReference type="NCBIfam" id="NF002936">
    <property type="entry name" value="PRK03580.1"/>
    <property type="match status" value="1"/>
</dbReference>
<dbReference type="PANTHER" id="PTHR11941:SF54">
    <property type="entry name" value="ENOYL-COA HYDRATASE, MITOCHONDRIAL"/>
    <property type="match status" value="1"/>
</dbReference>
<dbReference type="PANTHER" id="PTHR11941">
    <property type="entry name" value="ENOYL-COA HYDRATASE-RELATED"/>
    <property type="match status" value="1"/>
</dbReference>
<dbReference type="Pfam" id="PF00378">
    <property type="entry name" value="ECH_1"/>
    <property type="match status" value="1"/>
</dbReference>
<dbReference type="SUPFAM" id="SSF52096">
    <property type="entry name" value="ClpP/crotonase"/>
    <property type="match status" value="1"/>
</dbReference>
<dbReference type="PROSITE" id="PS00166">
    <property type="entry name" value="ENOYL_COA_HYDRATASE"/>
    <property type="match status" value="1"/>
</dbReference>
<comment type="function">
    <text evidence="2">Catalyzes the reversible dehydration of L-carnitinyl-CoA to crotonobetainyl-CoA.</text>
</comment>
<comment type="catalytic activity">
    <reaction evidence="2">
        <text>(R)-carnitinyl-CoA = crotonobetainyl-CoA + H2O</text>
        <dbReference type="Rhea" id="RHEA:28338"/>
        <dbReference type="ChEBI" id="CHEBI:15377"/>
        <dbReference type="ChEBI" id="CHEBI:60932"/>
        <dbReference type="ChEBI" id="CHEBI:60933"/>
        <dbReference type="EC" id="4.2.1.149"/>
    </reaction>
</comment>
<comment type="pathway">
    <text evidence="2">Amine and polyamine metabolism; carnitine metabolism.</text>
</comment>
<comment type="similarity">
    <text evidence="2 3">Belongs to the enoyl-CoA hydratase/isomerase family.</text>
</comment>
<keyword id="KW-0456">Lyase</keyword>
<keyword id="KW-1185">Reference proteome</keyword>
<accession>Q8ZRX5</accession>
<evidence type="ECO:0000250" key="1"/>
<evidence type="ECO:0000255" key="2">
    <source>
        <dbReference type="HAMAP-Rule" id="MF_01051"/>
    </source>
</evidence>
<evidence type="ECO:0000305" key="3"/>
<feature type="initiator methionine" description="Removed" evidence="1">
    <location>
        <position position="1"/>
    </location>
</feature>
<feature type="chain" id="PRO_0000109353" description="Carnitinyl-CoA dehydratase">
    <location>
        <begin position="2"/>
        <end position="261"/>
    </location>
</feature>
<feature type="active site" description="Nucleophile" evidence="2">
    <location>
        <position position="111"/>
    </location>
</feature>
<feature type="active site" description="Proton acceptor" evidence="2">
    <location>
        <position position="131"/>
    </location>
</feature>
<protein>
    <recommendedName>
        <fullName evidence="2">Carnitinyl-CoA dehydratase</fullName>
        <ecNumber evidence="2">4.2.1.149</ecNumber>
    </recommendedName>
    <alternativeName>
        <fullName evidence="2">Crotonobetainyl-CoA hydratase</fullName>
    </alternativeName>
</protein>